<accession>Q8NGZ5</accession>
<accession>Q5JQT2</accession>
<accession>Q6IEZ0</accession>
<keyword id="KW-1003">Cell membrane</keyword>
<keyword id="KW-1015">Disulfide bond</keyword>
<keyword id="KW-0297">G-protein coupled receptor</keyword>
<keyword id="KW-0325">Glycoprotein</keyword>
<keyword id="KW-0472">Membrane</keyword>
<keyword id="KW-0552">Olfaction</keyword>
<keyword id="KW-0675">Receptor</keyword>
<keyword id="KW-1185">Reference proteome</keyword>
<keyword id="KW-0716">Sensory transduction</keyword>
<keyword id="KW-0807">Transducer</keyword>
<keyword id="KW-0812">Transmembrane</keyword>
<keyword id="KW-1133">Transmembrane helix</keyword>
<name>OR2G2_HUMAN</name>
<comment type="function">
    <text evidence="3">Odorant receptor.</text>
</comment>
<comment type="subcellular location">
    <subcellularLocation>
        <location>Cell membrane</location>
        <topology>Multi-pass membrane protein</topology>
    </subcellularLocation>
</comment>
<comment type="similarity">
    <text evidence="2">Belongs to the G-protein coupled receptor 1 family.</text>
</comment>
<comment type="sequence caution" evidence="3">
    <conflict type="erroneous initiation">
        <sequence resource="EMBL-CDS" id="DAA04870"/>
    </conflict>
</comment>
<comment type="online information" name="Human Olfactory Receptor Data Exploratorium (HORDE)">
    <link uri="http://genome.weizmann.ac.il/horde/card/index/symbol:OR2G2"/>
</comment>
<reference key="1">
    <citation type="submission" date="2001-07" db="EMBL/GenBank/DDBJ databases">
        <title>Genome-wide discovery and analysis of human seven transmembrane helix receptor genes.</title>
        <authorList>
            <person name="Suwa M."/>
            <person name="Sato T."/>
            <person name="Okouchi I."/>
            <person name="Arita M."/>
            <person name="Futami K."/>
            <person name="Matsumoto S."/>
            <person name="Tsutsumi S."/>
            <person name="Aburatani H."/>
            <person name="Asai K."/>
            <person name="Akiyama Y."/>
        </authorList>
    </citation>
    <scope>NUCLEOTIDE SEQUENCE [GENOMIC DNA]</scope>
</reference>
<reference key="2">
    <citation type="journal article" date="2006" name="Nature">
        <title>The DNA sequence and biological annotation of human chromosome 1.</title>
        <authorList>
            <person name="Gregory S.G."/>
            <person name="Barlow K.F."/>
            <person name="McLay K.E."/>
            <person name="Kaul R."/>
            <person name="Swarbreck D."/>
            <person name="Dunham A."/>
            <person name="Scott C.E."/>
            <person name="Howe K.L."/>
            <person name="Woodfine K."/>
            <person name="Spencer C.C.A."/>
            <person name="Jones M.C."/>
            <person name="Gillson C."/>
            <person name="Searle S."/>
            <person name="Zhou Y."/>
            <person name="Kokocinski F."/>
            <person name="McDonald L."/>
            <person name="Evans R."/>
            <person name="Phillips K."/>
            <person name="Atkinson A."/>
            <person name="Cooper R."/>
            <person name="Jones C."/>
            <person name="Hall R.E."/>
            <person name="Andrews T.D."/>
            <person name="Lloyd C."/>
            <person name="Ainscough R."/>
            <person name="Almeida J.P."/>
            <person name="Ambrose K.D."/>
            <person name="Anderson F."/>
            <person name="Andrew R.W."/>
            <person name="Ashwell R.I.S."/>
            <person name="Aubin K."/>
            <person name="Babbage A.K."/>
            <person name="Bagguley C.L."/>
            <person name="Bailey J."/>
            <person name="Beasley H."/>
            <person name="Bethel G."/>
            <person name="Bird C.P."/>
            <person name="Bray-Allen S."/>
            <person name="Brown J.Y."/>
            <person name="Brown A.J."/>
            <person name="Buckley D."/>
            <person name="Burton J."/>
            <person name="Bye J."/>
            <person name="Carder C."/>
            <person name="Chapman J.C."/>
            <person name="Clark S.Y."/>
            <person name="Clarke G."/>
            <person name="Clee C."/>
            <person name="Cobley V."/>
            <person name="Collier R.E."/>
            <person name="Corby N."/>
            <person name="Coville G.J."/>
            <person name="Davies J."/>
            <person name="Deadman R."/>
            <person name="Dunn M."/>
            <person name="Earthrowl M."/>
            <person name="Ellington A.G."/>
            <person name="Errington H."/>
            <person name="Frankish A."/>
            <person name="Frankland J."/>
            <person name="French L."/>
            <person name="Garner P."/>
            <person name="Garnett J."/>
            <person name="Gay L."/>
            <person name="Ghori M.R.J."/>
            <person name="Gibson R."/>
            <person name="Gilby L.M."/>
            <person name="Gillett W."/>
            <person name="Glithero R.J."/>
            <person name="Grafham D.V."/>
            <person name="Griffiths C."/>
            <person name="Griffiths-Jones S."/>
            <person name="Grocock R."/>
            <person name="Hammond S."/>
            <person name="Harrison E.S.I."/>
            <person name="Hart E."/>
            <person name="Haugen E."/>
            <person name="Heath P.D."/>
            <person name="Holmes S."/>
            <person name="Holt K."/>
            <person name="Howden P.J."/>
            <person name="Hunt A.R."/>
            <person name="Hunt S.E."/>
            <person name="Hunter G."/>
            <person name="Isherwood J."/>
            <person name="James R."/>
            <person name="Johnson C."/>
            <person name="Johnson D."/>
            <person name="Joy A."/>
            <person name="Kay M."/>
            <person name="Kershaw J.K."/>
            <person name="Kibukawa M."/>
            <person name="Kimberley A.M."/>
            <person name="King A."/>
            <person name="Knights A.J."/>
            <person name="Lad H."/>
            <person name="Laird G."/>
            <person name="Lawlor S."/>
            <person name="Leongamornlert D.A."/>
            <person name="Lloyd D.M."/>
            <person name="Loveland J."/>
            <person name="Lovell J."/>
            <person name="Lush M.J."/>
            <person name="Lyne R."/>
            <person name="Martin S."/>
            <person name="Mashreghi-Mohammadi M."/>
            <person name="Matthews L."/>
            <person name="Matthews N.S.W."/>
            <person name="McLaren S."/>
            <person name="Milne S."/>
            <person name="Mistry S."/>
            <person name="Moore M.J.F."/>
            <person name="Nickerson T."/>
            <person name="O'Dell C.N."/>
            <person name="Oliver K."/>
            <person name="Palmeiri A."/>
            <person name="Palmer S.A."/>
            <person name="Parker A."/>
            <person name="Patel D."/>
            <person name="Pearce A.V."/>
            <person name="Peck A.I."/>
            <person name="Pelan S."/>
            <person name="Phelps K."/>
            <person name="Phillimore B.J."/>
            <person name="Plumb R."/>
            <person name="Rajan J."/>
            <person name="Raymond C."/>
            <person name="Rouse G."/>
            <person name="Saenphimmachak C."/>
            <person name="Sehra H.K."/>
            <person name="Sheridan E."/>
            <person name="Shownkeen R."/>
            <person name="Sims S."/>
            <person name="Skuce C.D."/>
            <person name="Smith M."/>
            <person name="Steward C."/>
            <person name="Subramanian S."/>
            <person name="Sycamore N."/>
            <person name="Tracey A."/>
            <person name="Tromans A."/>
            <person name="Van Helmond Z."/>
            <person name="Wall M."/>
            <person name="Wallis J.M."/>
            <person name="White S."/>
            <person name="Whitehead S.L."/>
            <person name="Wilkinson J.E."/>
            <person name="Willey D.L."/>
            <person name="Williams H."/>
            <person name="Wilming L."/>
            <person name="Wray P.W."/>
            <person name="Wu Z."/>
            <person name="Coulson A."/>
            <person name="Vaudin M."/>
            <person name="Sulston J.E."/>
            <person name="Durbin R.M."/>
            <person name="Hubbard T."/>
            <person name="Wooster R."/>
            <person name="Dunham I."/>
            <person name="Carter N.P."/>
            <person name="McVean G."/>
            <person name="Ross M.T."/>
            <person name="Harrow J."/>
            <person name="Olson M.V."/>
            <person name="Beck S."/>
            <person name="Rogers J."/>
            <person name="Bentley D.R."/>
        </authorList>
    </citation>
    <scope>NUCLEOTIDE SEQUENCE [LARGE SCALE GENOMIC DNA]</scope>
</reference>
<reference key="3">
    <citation type="journal article" date="2004" name="Proc. Natl. Acad. Sci. U.S.A.">
        <title>The human olfactory receptor gene family.</title>
        <authorList>
            <person name="Malnic B."/>
            <person name="Godfrey P.A."/>
            <person name="Buck L.B."/>
        </authorList>
    </citation>
    <scope>IDENTIFICATION</scope>
</reference>
<reference key="4">
    <citation type="journal article" date="2004" name="Proc. Natl. Acad. Sci. U.S.A.">
        <authorList>
            <person name="Malnic B."/>
            <person name="Godfrey P.A."/>
            <person name="Buck L.B."/>
        </authorList>
    </citation>
    <scope>ERRATUM OF PUBMED:14983052</scope>
</reference>
<evidence type="ECO:0000255" key="1"/>
<evidence type="ECO:0000255" key="2">
    <source>
        <dbReference type="PROSITE-ProRule" id="PRU00521"/>
    </source>
</evidence>
<evidence type="ECO:0000305" key="3"/>
<feature type="chain" id="PRO_0000150476" description="Olfactory receptor 2G2">
    <location>
        <begin position="1"/>
        <end position="317"/>
    </location>
</feature>
<feature type="topological domain" description="Extracellular" evidence="1">
    <location>
        <begin position="1"/>
        <end position="28"/>
    </location>
</feature>
<feature type="transmembrane region" description="Helical; Name=1" evidence="1">
    <location>
        <begin position="29"/>
        <end position="52"/>
    </location>
</feature>
<feature type="topological domain" description="Cytoplasmic" evidence="1">
    <location>
        <begin position="53"/>
        <end position="60"/>
    </location>
</feature>
<feature type="transmembrane region" description="Helical; Name=2" evidence="1">
    <location>
        <begin position="61"/>
        <end position="82"/>
    </location>
</feature>
<feature type="topological domain" description="Extracellular" evidence="1">
    <location>
        <begin position="83"/>
        <end position="103"/>
    </location>
</feature>
<feature type="transmembrane region" description="Helical; Name=3" evidence="1">
    <location>
        <begin position="104"/>
        <end position="123"/>
    </location>
</feature>
<feature type="topological domain" description="Cytoplasmic" evidence="1">
    <location>
        <begin position="124"/>
        <end position="142"/>
    </location>
</feature>
<feature type="transmembrane region" description="Helical; Name=4" evidence="1">
    <location>
        <begin position="143"/>
        <end position="161"/>
    </location>
</feature>
<feature type="topological domain" description="Extracellular" evidence="1">
    <location>
        <begin position="162"/>
        <end position="198"/>
    </location>
</feature>
<feature type="transmembrane region" description="Helical; Name=5" evidence="1">
    <location>
        <begin position="199"/>
        <end position="222"/>
    </location>
</feature>
<feature type="topological domain" description="Cytoplasmic" evidence="1">
    <location>
        <begin position="223"/>
        <end position="239"/>
    </location>
</feature>
<feature type="transmembrane region" description="Helical; Name=6" evidence="1">
    <location>
        <begin position="240"/>
        <end position="262"/>
    </location>
</feature>
<feature type="topological domain" description="Extracellular" evidence="1">
    <location>
        <begin position="263"/>
        <end position="275"/>
    </location>
</feature>
<feature type="transmembrane region" description="Helical; Name=7" evidence="1">
    <location>
        <begin position="276"/>
        <end position="295"/>
    </location>
</feature>
<feature type="topological domain" description="Cytoplasmic" evidence="1">
    <location>
        <begin position="296"/>
        <end position="317"/>
    </location>
</feature>
<feature type="glycosylation site" description="N-linked (GlcNAc...) asparagine" evidence="1">
    <location>
        <position position="8"/>
    </location>
</feature>
<feature type="disulfide bond" evidence="2">
    <location>
        <begin position="100"/>
        <end position="192"/>
    </location>
</feature>
<feature type="sequence variant" id="VAR_034174" description="In dbSNP:rs12737801.">
    <original>P</original>
    <variation>A</variation>
    <location>
        <position position="24"/>
    </location>
</feature>
<feature type="sequence variant" id="VAR_034175" description="In dbSNP:rs1151687.">
    <original>V</original>
    <variation>L</variation>
    <location>
        <position position="120"/>
    </location>
</feature>
<feature type="sequence variant" id="VAR_034176" description="In dbSNP:rs10925085.">
    <original>L</original>
    <variation>P</variation>
    <location>
        <position position="167"/>
    </location>
</feature>
<feature type="sequence variant" id="VAR_034177" description="In dbSNP:rs869111.">
    <original>R</original>
    <variation>G</variation>
    <location>
        <position position="236"/>
    </location>
</feature>
<proteinExistence type="inferred from homology"/>
<sequence>MGMVRHTNESNLAGFILLGFSDYPQLQKVLFVLILILYLLTILGNTTIILVSRLEPKLHMPMYFFLSHLSFLYRCFTSSVIPQLLVNLWEPMKTIAYGGCLVHLYNSHALGSTECVLPAVMSCDRYVAVCRPLHYTVLMHIHLCMALASMAWLSGIATTLVQSTLTLQLPFCGHRQVDHFICEVPVLIKLACVGTTFNEAELFVASILFLIVPVSFILVSSGYIAHAVLRIKSATRRQKAFGTCFSHLTVVTIFYGTIIFMYLQPAKSRSRDQGKFVSLFYTVVTRMLNPLIYTLRIKEVKGALKKVLAKALGVNIL</sequence>
<dbReference type="EMBL" id="AB065621">
    <property type="protein sequence ID" value="BAC05847.1"/>
    <property type="molecule type" value="Genomic_DNA"/>
</dbReference>
<dbReference type="EMBL" id="AL606804">
    <property type="status" value="NOT_ANNOTATED_CDS"/>
    <property type="molecule type" value="Genomic_DNA"/>
</dbReference>
<dbReference type="EMBL" id="BK004472">
    <property type="protein sequence ID" value="DAA04870.1"/>
    <property type="status" value="ALT_INIT"/>
    <property type="molecule type" value="Genomic_DNA"/>
</dbReference>
<dbReference type="CCDS" id="CCDS31092.1"/>
<dbReference type="RefSeq" id="NP_001001915.1">
    <property type="nucleotide sequence ID" value="NM_001001915.1"/>
</dbReference>
<dbReference type="SMR" id="Q8NGZ5"/>
<dbReference type="FunCoup" id="Q8NGZ5">
    <property type="interactions" value="451"/>
</dbReference>
<dbReference type="STRING" id="9606.ENSP00000326349"/>
<dbReference type="GlyCosmos" id="Q8NGZ5">
    <property type="glycosylation" value="1 site, No reported glycans"/>
</dbReference>
<dbReference type="GlyGen" id="Q8NGZ5">
    <property type="glycosylation" value="1 site"/>
</dbReference>
<dbReference type="iPTMnet" id="Q8NGZ5"/>
<dbReference type="PhosphoSitePlus" id="Q8NGZ5"/>
<dbReference type="BioMuta" id="OR2G2"/>
<dbReference type="DMDM" id="38372795"/>
<dbReference type="MassIVE" id="Q8NGZ5"/>
<dbReference type="PaxDb" id="9606-ENSP00000326349"/>
<dbReference type="PeptideAtlas" id="Q8NGZ5"/>
<dbReference type="Antibodypedia" id="34729">
    <property type="antibodies" value="48 antibodies from 16 providers"/>
</dbReference>
<dbReference type="DNASU" id="81470"/>
<dbReference type="Ensembl" id="ENST00000320065.1">
    <property type="protein sequence ID" value="ENSP00000326349.1"/>
    <property type="gene ID" value="ENSG00000177489.1"/>
</dbReference>
<dbReference type="GeneID" id="81470"/>
<dbReference type="KEGG" id="hsa:81470"/>
<dbReference type="MANE-Select" id="ENST00000320065.1">
    <property type="protein sequence ID" value="ENSP00000326349.1"/>
    <property type="RefSeq nucleotide sequence ID" value="NM_001001915.1"/>
    <property type="RefSeq protein sequence ID" value="NP_001001915.1"/>
</dbReference>
<dbReference type="UCSC" id="uc010pyy.2">
    <property type="organism name" value="human"/>
</dbReference>
<dbReference type="AGR" id="HGNC:15007"/>
<dbReference type="CTD" id="81470"/>
<dbReference type="GeneCards" id="OR2G2"/>
<dbReference type="HGNC" id="HGNC:15007">
    <property type="gene designation" value="OR2G2"/>
</dbReference>
<dbReference type="HPA" id="ENSG00000177489">
    <property type="expression patterns" value="Not detected"/>
</dbReference>
<dbReference type="neXtProt" id="NX_Q8NGZ5"/>
<dbReference type="OpenTargets" id="ENSG00000177489"/>
<dbReference type="PharmGKB" id="PA32159"/>
<dbReference type="VEuPathDB" id="HostDB:ENSG00000177489"/>
<dbReference type="eggNOG" id="ENOG502SI2C">
    <property type="taxonomic scope" value="Eukaryota"/>
</dbReference>
<dbReference type="GeneTree" id="ENSGT01130000278266"/>
<dbReference type="HOGENOM" id="CLU_012526_1_2_1"/>
<dbReference type="InParanoid" id="Q8NGZ5"/>
<dbReference type="OMA" id="WDPMKNI"/>
<dbReference type="OrthoDB" id="5950740at2759"/>
<dbReference type="PAN-GO" id="Q8NGZ5">
    <property type="GO annotations" value="0 GO annotations based on evolutionary models"/>
</dbReference>
<dbReference type="PhylomeDB" id="Q8NGZ5"/>
<dbReference type="TreeFam" id="TF336512"/>
<dbReference type="PathwayCommons" id="Q8NGZ5"/>
<dbReference type="Reactome" id="R-HSA-9752946">
    <property type="pathway name" value="Expression and translocation of olfactory receptors"/>
</dbReference>
<dbReference type="BioGRID-ORCS" id="81470">
    <property type="hits" value="16 hits in 755 CRISPR screens"/>
</dbReference>
<dbReference type="GeneWiki" id="OR2G2"/>
<dbReference type="GenomeRNAi" id="81470"/>
<dbReference type="Pharos" id="Q8NGZ5">
    <property type="development level" value="Tdark"/>
</dbReference>
<dbReference type="PRO" id="PR:Q8NGZ5"/>
<dbReference type="Proteomes" id="UP000005640">
    <property type="component" value="Chromosome 1"/>
</dbReference>
<dbReference type="RNAct" id="Q8NGZ5">
    <property type="molecule type" value="protein"/>
</dbReference>
<dbReference type="Bgee" id="ENSG00000177489">
    <property type="expression patterns" value="Expressed in male germ line stem cell (sensu Vertebrata) in testis"/>
</dbReference>
<dbReference type="GO" id="GO:0005886">
    <property type="term" value="C:plasma membrane"/>
    <property type="evidence" value="ECO:0000318"/>
    <property type="project" value="GO_Central"/>
</dbReference>
<dbReference type="GO" id="GO:0004930">
    <property type="term" value="F:G protein-coupled receptor activity"/>
    <property type="evidence" value="ECO:0007669"/>
    <property type="project" value="UniProtKB-KW"/>
</dbReference>
<dbReference type="GO" id="GO:0004984">
    <property type="term" value="F:olfactory receptor activity"/>
    <property type="evidence" value="ECO:0000318"/>
    <property type="project" value="GO_Central"/>
</dbReference>
<dbReference type="GO" id="GO:0050911">
    <property type="term" value="P:detection of chemical stimulus involved in sensory perception of smell"/>
    <property type="evidence" value="ECO:0000318"/>
    <property type="project" value="GO_Central"/>
</dbReference>
<dbReference type="CDD" id="cd15947">
    <property type="entry name" value="7tmA_OR2B-like"/>
    <property type="match status" value="1"/>
</dbReference>
<dbReference type="FunFam" id="1.20.1070.10:FF:000005">
    <property type="entry name" value="Olfactory receptor"/>
    <property type="match status" value="1"/>
</dbReference>
<dbReference type="Gene3D" id="1.20.1070.10">
    <property type="entry name" value="Rhodopsin 7-helix transmembrane proteins"/>
    <property type="match status" value="1"/>
</dbReference>
<dbReference type="InterPro" id="IPR000276">
    <property type="entry name" value="GPCR_Rhodpsn"/>
</dbReference>
<dbReference type="InterPro" id="IPR017452">
    <property type="entry name" value="GPCR_Rhodpsn_7TM"/>
</dbReference>
<dbReference type="InterPro" id="IPR000725">
    <property type="entry name" value="Olfact_rcpt"/>
</dbReference>
<dbReference type="PANTHER" id="PTHR26453">
    <property type="entry name" value="OLFACTORY RECEPTOR"/>
    <property type="match status" value="1"/>
</dbReference>
<dbReference type="Pfam" id="PF13853">
    <property type="entry name" value="7tm_4"/>
    <property type="match status" value="1"/>
</dbReference>
<dbReference type="PRINTS" id="PR00237">
    <property type="entry name" value="GPCRRHODOPSN"/>
</dbReference>
<dbReference type="PRINTS" id="PR00245">
    <property type="entry name" value="OLFACTORYR"/>
</dbReference>
<dbReference type="SUPFAM" id="SSF81321">
    <property type="entry name" value="Family A G protein-coupled receptor-like"/>
    <property type="match status" value="1"/>
</dbReference>
<dbReference type="PROSITE" id="PS50262">
    <property type="entry name" value="G_PROTEIN_RECEP_F1_2"/>
    <property type="match status" value="1"/>
</dbReference>
<protein>
    <recommendedName>
        <fullName>Olfactory receptor 2G2</fullName>
    </recommendedName>
    <alternativeName>
        <fullName>Olfactory receptor OR1-32</fullName>
    </alternativeName>
</protein>
<gene>
    <name type="primary">OR2G2</name>
</gene>
<organism>
    <name type="scientific">Homo sapiens</name>
    <name type="common">Human</name>
    <dbReference type="NCBI Taxonomy" id="9606"/>
    <lineage>
        <taxon>Eukaryota</taxon>
        <taxon>Metazoa</taxon>
        <taxon>Chordata</taxon>
        <taxon>Craniata</taxon>
        <taxon>Vertebrata</taxon>
        <taxon>Euteleostomi</taxon>
        <taxon>Mammalia</taxon>
        <taxon>Eutheria</taxon>
        <taxon>Euarchontoglires</taxon>
        <taxon>Primates</taxon>
        <taxon>Haplorrhini</taxon>
        <taxon>Catarrhini</taxon>
        <taxon>Hominidae</taxon>
        <taxon>Homo</taxon>
    </lineage>
</organism>